<keyword id="KW-0012">Acyltransferase</keyword>
<keyword id="KW-0276">Fatty acid metabolism</keyword>
<keyword id="KW-0443">Lipid metabolism</keyword>
<keyword id="KW-0576">Peroxisome</keyword>
<keyword id="KW-1185">Reference proteome</keyword>
<keyword id="KW-0808">Transferase</keyword>
<organism>
    <name type="scientific">Rattus norvegicus</name>
    <name type="common">Rat</name>
    <dbReference type="NCBI Taxonomy" id="10116"/>
    <lineage>
        <taxon>Eukaryota</taxon>
        <taxon>Metazoa</taxon>
        <taxon>Chordata</taxon>
        <taxon>Craniata</taxon>
        <taxon>Vertebrata</taxon>
        <taxon>Euteleostomi</taxon>
        <taxon>Mammalia</taxon>
        <taxon>Eutheria</taxon>
        <taxon>Euarchontoglires</taxon>
        <taxon>Glires</taxon>
        <taxon>Rodentia</taxon>
        <taxon>Myomorpha</taxon>
        <taxon>Muroidea</taxon>
        <taxon>Muridae</taxon>
        <taxon>Murinae</taxon>
        <taxon>Rattus</taxon>
    </lineage>
</organism>
<sequence>MLQLIATPSNALADEPVSIRAIGLPPSQIVTITATVKDEKENLFQSKAFYKANEAGEVDLEQASALGGDYVGVHPMGLFCCLKPKRAFQRLIKKDVMNSPLCICLDLYDSVCWLETVRIPPKASQIVHRWFAGPGVKREQIREGRVRGALFLPPGKGPFPGIIDLFGSIGGLVEFRASLLASRGFAVLALAYFAYEDLPKVLLEEDLDYFEEAANFLLAHPKIQQPGIGVISVSKGAEIGLAMACYLKQVVATVCINGPSAIFDFPLKYRDLVVTPMRLAFEKIQFHGSGAACFRHCWDPQNMLNPPKILPVEKAQGKILFIVGENDQCLASKLHAQRAMDRLRSHGRSSGRMLAYPGAGHLIEPPYSPFCFACWDSVLGKPMLWGGDPIAHAAAQVHSWREIQKFFRQHLLQSGGKL</sequence>
<comment type="function">
    <text evidence="1">Acyltransferase which efficiently conjugates very long-chain and long-chain fatty acids to taurine. Shows no conjugation activity in the presence of glycine (By similarity).</text>
</comment>
<comment type="subcellular location">
    <subcellularLocation>
        <location evidence="1">Peroxisome</location>
    </subcellularLocation>
</comment>
<comment type="similarity">
    <text evidence="4">Belongs to the C/M/P thioester hydrolase family.</text>
</comment>
<gene>
    <name evidence="3" type="primary">Acnat2</name>
</gene>
<accession>Q5FVR5</accession>
<proteinExistence type="evidence at transcript level"/>
<evidence type="ECO:0000250" key="1">
    <source>
        <dbReference type="UniProtKB" id="A2AKK5"/>
    </source>
</evidence>
<evidence type="ECO:0000250" key="2">
    <source>
        <dbReference type="UniProtKB" id="O55137"/>
    </source>
</evidence>
<evidence type="ECO:0000250" key="3">
    <source>
        <dbReference type="UniProtKB" id="Q8BGG9"/>
    </source>
</evidence>
<evidence type="ECO:0000255" key="4"/>
<evidence type="ECO:0000312" key="5">
    <source>
        <dbReference type="EMBL" id="AAH89827.1"/>
    </source>
</evidence>
<reference evidence="5" key="1">
    <citation type="journal article" date="2004" name="Genome Res.">
        <title>The status, quality, and expansion of the NIH full-length cDNA project: the Mammalian Gene Collection (MGC).</title>
        <authorList>
            <consortium name="The MGC Project Team"/>
        </authorList>
    </citation>
    <scope>NUCLEOTIDE SEQUENCE [LARGE SCALE MRNA]</scope>
    <source>
        <tissue evidence="5">Liver</tissue>
    </source>
</reference>
<name>ACNT2_RAT</name>
<dbReference type="EC" id="2.3.1.-"/>
<dbReference type="EMBL" id="BC089827">
    <property type="protein sequence ID" value="AAH89827.1"/>
    <property type="molecule type" value="mRNA"/>
</dbReference>
<dbReference type="RefSeq" id="NP_001014085.1">
    <property type="nucleotide sequence ID" value="NM_001014063.1"/>
</dbReference>
<dbReference type="SMR" id="Q5FVR5"/>
<dbReference type="FunCoup" id="Q5FVR5">
    <property type="interactions" value="116"/>
</dbReference>
<dbReference type="STRING" id="10116.ENSRNOP00000069269"/>
<dbReference type="ESTHER" id="ratno-q5fvr5">
    <property type="family name" value="Acyl-CoA_Thioesterase"/>
</dbReference>
<dbReference type="MEROPS" id="S09.A50"/>
<dbReference type="iPTMnet" id="Q5FVR5"/>
<dbReference type="PhosphoSitePlus" id="Q5FVR5"/>
<dbReference type="PaxDb" id="10116-ENSRNOP00000056642"/>
<dbReference type="GeneID" id="313220"/>
<dbReference type="KEGG" id="rno:313220"/>
<dbReference type="UCSC" id="RGD:1359532">
    <property type="organism name" value="rat"/>
</dbReference>
<dbReference type="AGR" id="RGD:1359532"/>
<dbReference type="CTD" id="209186"/>
<dbReference type="RGD" id="1359532">
    <property type="gene designation" value="Acnat2"/>
</dbReference>
<dbReference type="VEuPathDB" id="HostDB:ENSRNOG00000051912"/>
<dbReference type="eggNOG" id="ENOG502QQ8Z">
    <property type="taxonomic scope" value="Eukaryota"/>
</dbReference>
<dbReference type="HOGENOM" id="CLU_029849_4_0_1"/>
<dbReference type="InParanoid" id="Q5FVR5"/>
<dbReference type="OMA" id="TPKPVAW"/>
<dbReference type="OrthoDB" id="57871at9989"/>
<dbReference type="PhylomeDB" id="Q5FVR5"/>
<dbReference type="TreeFam" id="TF314911"/>
<dbReference type="PRO" id="PR:Q5FVR5"/>
<dbReference type="Proteomes" id="UP000002494">
    <property type="component" value="Chromosome 5"/>
</dbReference>
<dbReference type="Bgee" id="ENSRNOG00000051912">
    <property type="expression patterns" value="Expressed in liver and 1 other cell type or tissue"/>
</dbReference>
<dbReference type="ExpressionAtlas" id="Q5FVR5">
    <property type="expression patterns" value="baseline"/>
</dbReference>
<dbReference type="GO" id="GO:0005777">
    <property type="term" value="C:peroxisome"/>
    <property type="evidence" value="ECO:0000250"/>
    <property type="project" value="UniProtKB"/>
</dbReference>
<dbReference type="GO" id="GO:0047617">
    <property type="term" value="F:fatty acyl-CoA hydrolase activity"/>
    <property type="evidence" value="ECO:0000318"/>
    <property type="project" value="GO_Central"/>
</dbReference>
<dbReference type="GO" id="GO:0016410">
    <property type="term" value="F:N-acyltransferase activity"/>
    <property type="evidence" value="ECO:0000250"/>
    <property type="project" value="UniProtKB"/>
</dbReference>
<dbReference type="GO" id="GO:0006637">
    <property type="term" value="P:acyl-CoA metabolic process"/>
    <property type="evidence" value="ECO:0000318"/>
    <property type="project" value="GO_Central"/>
</dbReference>
<dbReference type="GO" id="GO:0006631">
    <property type="term" value="P:fatty acid metabolic process"/>
    <property type="evidence" value="ECO:0000250"/>
    <property type="project" value="UniProtKB"/>
</dbReference>
<dbReference type="FunFam" id="2.60.40.2240:FF:000001">
    <property type="entry name" value="acyl-coenzyme A thioesterase 4"/>
    <property type="match status" value="1"/>
</dbReference>
<dbReference type="FunFam" id="3.40.50.1820:FF:000024">
    <property type="entry name" value="acyl-coenzyme A thioesterase 4"/>
    <property type="match status" value="1"/>
</dbReference>
<dbReference type="Gene3D" id="2.60.40.2240">
    <property type="entry name" value="Acyl-CoA thioester hydrolase/BAAT N-terminal domain"/>
    <property type="match status" value="1"/>
</dbReference>
<dbReference type="Gene3D" id="3.40.50.1820">
    <property type="entry name" value="alpha/beta hydrolase"/>
    <property type="match status" value="1"/>
</dbReference>
<dbReference type="InterPro" id="IPR029058">
    <property type="entry name" value="AB_hydrolase_fold"/>
</dbReference>
<dbReference type="InterPro" id="IPR016662">
    <property type="entry name" value="Acyl-CoA_thioEstase_long-chain"/>
</dbReference>
<dbReference type="InterPro" id="IPR014940">
    <property type="entry name" value="BAAT_C"/>
</dbReference>
<dbReference type="InterPro" id="IPR006862">
    <property type="entry name" value="Thio_Ohase/aa_AcTrfase"/>
</dbReference>
<dbReference type="InterPro" id="IPR042490">
    <property type="entry name" value="Thio_Ohase/BAAT_N"/>
</dbReference>
<dbReference type="PANTHER" id="PTHR10824:SF1">
    <property type="entry name" value="ACYL-COENZYME A AMINO ACID N-ACYLTRANSFERASE 1-RELATED"/>
    <property type="match status" value="1"/>
</dbReference>
<dbReference type="PANTHER" id="PTHR10824">
    <property type="entry name" value="ACYL-COENZYME A THIOESTERASE-RELATED"/>
    <property type="match status" value="1"/>
</dbReference>
<dbReference type="Pfam" id="PF08840">
    <property type="entry name" value="BAAT_C"/>
    <property type="match status" value="1"/>
</dbReference>
<dbReference type="Pfam" id="PF04775">
    <property type="entry name" value="Bile_Hydr_Trans"/>
    <property type="match status" value="1"/>
</dbReference>
<dbReference type="PIRSF" id="PIRSF016521">
    <property type="entry name" value="Acyl-CoA_hydro"/>
    <property type="match status" value="1"/>
</dbReference>
<dbReference type="SUPFAM" id="SSF53474">
    <property type="entry name" value="alpha/beta-Hydrolases"/>
    <property type="match status" value="1"/>
</dbReference>
<protein>
    <recommendedName>
        <fullName evidence="3">Acyl-coenzyme A amino acid N-acyltransferase 2</fullName>
        <ecNumber>2.3.1.-</ecNumber>
    </recommendedName>
</protein>
<feature type="chain" id="PRO_0000352776" description="Acyl-coenzyme A amino acid N-acyltransferase 2">
    <location>
        <begin position="1"/>
        <end position="418"/>
    </location>
</feature>
<feature type="short sequence motif" description="Microbody targeting signal">
    <location>
        <begin position="416"/>
        <end position="418"/>
    </location>
</feature>
<feature type="active site" description="Charge relay system" evidence="2">
    <location>
        <position position="234"/>
    </location>
</feature>
<feature type="active site" description="Charge relay system" evidence="2">
    <location>
        <position position="327"/>
    </location>
</feature>
<feature type="active site" description="Charge relay system" evidence="2">
    <location>
        <position position="361"/>
    </location>
</feature>